<organism>
    <name type="scientific">Escherichia coli O157:H7</name>
    <dbReference type="NCBI Taxonomy" id="83334"/>
    <lineage>
        <taxon>Bacteria</taxon>
        <taxon>Pseudomonadati</taxon>
        <taxon>Pseudomonadota</taxon>
        <taxon>Gammaproteobacteria</taxon>
        <taxon>Enterobacterales</taxon>
        <taxon>Enterobacteriaceae</taxon>
        <taxon>Escherichia</taxon>
    </lineage>
</organism>
<reference key="1">
    <citation type="journal article" date="2001" name="Nature">
        <title>Genome sequence of enterohaemorrhagic Escherichia coli O157:H7.</title>
        <authorList>
            <person name="Perna N.T."/>
            <person name="Plunkett G. III"/>
            <person name="Burland V."/>
            <person name="Mau B."/>
            <person name="Glasner J.D."/>
            <person name="Rose D.J."/>
            <person name="Mayhew G.F."/>
            <person name="Evans P.S."/>
            <person name="Gregor J."/>
            <person name="Kirkpatrick H.A."/>
            <person name="Posfai G."/>
            <person name="Hackett J."/>
            <person name="Klink S."/>
            <person name="Boutin A."/>
            <person name="Shao Y."/>
            <person name="Miller L."/>
            <person name="Grotbeck E.J."/>
            <person name="Davis N.W."/>
            <person name="Lim A."/>
            <person name="Dimalanta E.T."/>
            <person name="Potamousis K."/>
            <person name="Apodaca J."/>
            <person name="Anantharaman T.S."/>
            <person name="Lin J."/>
            <person name="Yen G."/>
            <person name="Schwartz D.C."/>
            <person name="Welch R.A."/>
            <person name="Blattner F.R."/>
        </authorList>
    </citation>
    <scope>NUCLEOTIDE SEQUENCE [LARGE SCALE GENOMIC DNA]</scope>
    <source>
        <strain>O157:H7 / EDL933 / ATCC 700927 / EHEC</strain>
    </source>
</reference>
<reference key="2">
    <citation type="journal article" date="2001" name="DNA Res.">
        <title>Complete genome sequence of enterohemorrhagic Escherichia coli O157:H7 and genomic comparison with a laboratory strain K-12.</title>
        <authorList>
            <person name="Hayashi T."/>
            <person name="Makino K."/>
            <person name="Ohnishi M."/>
            <person name="Kurokawa K."/>
            <person name="Ishii K."/>
            <person name="Yokoyama K."/>
            <person name="Han C.-G."/>
            <person name="Ohtsubo E."/>
            <person name="Nakayama K."/>
            <person name="Murata T."/>
            <person name="Tanaka M."/>
            <person name="Tobe T."/>
            <person name="Iida T."/>
            <person name="Takami H."/>
            <person name="Honda T."/>
            <person name="Sasakawa C."/>
            <person name="Ogasawara N."/>
            <person name="Yasunaga T."/>
            <person name="Kuhara S."/>
            <person name="Shiba T."/>
            <person name="Hattori M."/>
            <person name="Shinagawa H."/>
        </authorList>
    </citation>
    <scope>NUCLEOTIDE SEQUENCE [LARGE SCALE GENOMIC DNA]</scope>
    <source>
        <strain>O157:H7 / Sakai / RIMD 0509952 / EHEC</strain>
    </source>
</reference>
<sequence>MLFTIQLIIILICLFYGARKGGIALGLLGGIGLVILVFVFHLQPGKPPVDVMLVIIAVVAASATLQASGGLDVMLQIAEKLLRRNPKYVSIVAPFVTCTLTILCGTGHVVYTILPIIYDVAIKNNIRPERPMAASSIGAQMGIIASPVSVAVVSLVAMLGNVTFDGRHLEFLDLLAITIPSTLIGILAIGIFSWFRGKDLDKDEEFQKFISVPENREYVYGDTATLLDKKLPKSNWLAMWIFLGAIAVVALLGADSDLRPSFGGKPLSMVLVIQMFMLLTGALIIILTKTNPASISKNEVFRSGMIAIVAVYGIAWMAETMFGAHMSEIQGVLGEMVKEYPWAYAIVLLLVSKFVNSQAAALAAIVPVALAIGVDPAYIVASAPACYGYYILPTYPSDLAAIQFDRSGTTHIGRFVINHSFILPGLIGVSVSCVFGWIFAAMYGFL</sequence>
<evidence type="ECO:0000250" key="1">
    <source>
        <dbReference type="UniProtKB" id="P0ABN9"/>
    </source>
</evidence>
<evidence type="ECO:0000305" key="2"/>
<comment type="function">
    <text evidence="1">Bifunctional protein with a transport and a regulatory function. Responsible for the transport of C4-dicarboxylates during anaerobic growth. Catalyzes the uptake of fumarate, malate, aspartate or D-tartrate coupled to the export of succinate. May function primarily as a C4-dicarboxylate transporter during fumarate respiration. Required for anaerobic growth on D-tartrate.</text>
</comment>
<comment type="function">
    <text evidence="1">In addition, possesses a regulatory function, which is independent from the transport function, and is required for the response of the DcuS/DcuR two-component system to C4-dicarboxylates (By similarity). DcuB interacts physically with DcuS and converts DcuS to the C4-dicarboxylate responsive form (By similarity).</text>
</comment>
<comment type="catalytic activity">
    <reaction evidence="1">
        <text>fumarate(in) + succinate(out) = fumarate(out) + succinate(in)</text>
        <dbReference type="Rhea" id="RHEA:29323"/>
        <dbReference type="ChEBI" id="CHEBI:29806"/>
        <dbReference type="ChEBI" id="CHEBI:30031"/>
    </reaction>
    <physiologicalReaction direction="right-to-left" evidence="1">
        <dbReference type="Rhea" id="RHEA:29325"/>
    </physiologicalReaction>
</comment>
<comment type="catalytic activity">
    <reaction evidence="1">
        <text>(S)-malate(in) + succinate(out) = (S)-malate(out) + succinate(in)</text>
        <dbReference type="Rhea" id="RHEA:29327"/>
        <dbReference type="ChEBI" id="CHEBI:15589"/>
        <dbReference type="ChEBI" id="CHEBI:30031"/>
    </reaction>
    <physiologicalReaction direction="right-to-left" evidence="1">
        <dbReference type="Rhea" id="RHEA:29329"/>
    </physiologicalReaction>
</comment>
<comment type="catalytic activity">
    <reaction evidence="1">
        <text>L-aspartate(in) + succinate(out) = L-aspartate(out) + succinate(in)</text>
        <dbReference type="Rhea" id="RHEA:29343"/>
        <dbReference type="ChEBI" id="CHEBI:29991"/>
        <dbReference type="ChEBI" id="CHEBI:30031"/>
    </reaction>
    <physiologicalReaction direction="right-to-left" evidence="1">
        <dbReference type="Rhea" id="RHEA:29345"/>
    </physiologicalReaction>
</comment>
<comment type="catalytic activity">
    <reaction evidence="1">
        <text>(S,S)-tartrate(out) + succinate(in) = (S,S)-tartrate(in) + succinate(out)</text>
        <dbReference type="Rhea" id="RHEA:34763"/>
        <dbReference type="ChEBI" id="CHEBI:30031"/>
        <dbReference type="ChEBI" id="CHEBI:30927"/>
    </reaction>
    <physiologicalReaction direction="left-to-right" evidence="1">
        <dbReference type="Rhea" id="RHEA:34764"/>
    </physiologicalReaction>
</comment>
<comment type="subunit">
    <text evidence="1">Interacts with DcuS.</text>
</comment>
<comment type="subcellular location">
    <subcellularLocation>
        <location evidence="1">Cell inner membrane</location>
        <topology evidence="1">Multi-pass membrane protein</topology>
    </subcellularLocation>
</comment>
<comment type="similarity">
    <text evidence="2">Belongs to the DcuA/DcuB transporter (TC 2.A.13.1) family.</text>
</comment>
<proteinExistence type="inferred from homology"/>
<keyword id="KW-0050">Antiport</keyword>
<keyword id="KW-0997">Cell inner membrane</keyword>
<keyword id="KW-1003">Cell membrane</keyword>
<keyword id="KW-0472">Membrane</keyword>
<keyword id="KW-1185">Reference proteome</keyword>
<keyword id="KW-0812">Transmembrane</keyword>
<keyword id="KW-1133">Transmembrane helix</keyword>
<keyword id="KW-0813">Transport</keyword>
<gene>
    <name type="primary">dcuB</name>
    <name type="ordered locus">Z5725</name>
    <name type="ordered locus">ECs5105</name>
</gene>
<feature type="chain" id="PRO_0000170356" description="Anaerobic C4-dicarboxylate transporter DcuB">
    <location>
        <begin position="1"/>
        <end position="446"/>
    </location>
</feature>
<feature type="transmembrane region" description="Helical" evidence="1">
    <location>
        <begin position="1"/>
        <end position="18"/>
    </location>
</feature>
<feature type="topological domain" description="Cytoplasmic" evidence="1">
    <location>
        <begin position="19"/>
        <end position="22"/>
    </location>
</feature>
<feature type="transmembrane region" description="Helical" evidence="1">
    <location>
        <begin position="23"/>
        <end position="39"/>
    </location>
</feature>
<feature type="topological domain" description="Periplasmic" evidence="1">
    <location>
        <begin position="40"/>
        <end position="53"/>
    </location>
</feature>
<feature type="transmembrane region" description="Helical" evidence="1">
    <location>
        <begin position="54"/>
        <end position="70"/>
    </location>
</feature>
<feature type="topological domain" description="Cytoplasmic" evidence="1">
    <location>
        <begin position="71"/>
        <end position="87"/>
    </location>
</feature>
<feature type="intramembrane region" description="Helical" evidence="1">
    <location>
        <begin position="88"/>
        <end position="105"/>
    </location>
</feature>
<feature type="intramembrane region" evidence="1">
    <location>
        <begin position="106"/>
        <end position="114"/>
    </location>
</feature>
<feature type="intramembrane region" description="Helical" evidence="1">
    <location>
        <begin position="115"/>
        <end position="128"/>
    </location>
</feature>
<feature type="intramembrane region" evidence="1">
    <location>
        <begin position="129"/>
        <end position="133"/>
    </location>
</feature>
<feature type="intramembrane region" description="Helical" evidence="1">
    <location>
        <begin position="134"/>
        <end position="159"/>
    </location>
</feature>
<feature type="topological domain" description="Periplasmic" evidence="1">
    <location>
        <begin position="160"/>
        <end position="178"/>
    </location>
</feature>
<feature type="transmembrane region" description="Helical" evidence="1">
    <location>
        <begin position="179"/>
        <end position="194"/>
    </location>
</feature>
<feature type="topological domain" description="Cytoplasmic" evidence="1">
    <location>
        <begin position="195"/>
        <end position="234"/>
    </location>
</feature>
<feature type="transmembrane region" description="Helical" evidence="1">
    <location>
        <begin position="235"/>
        <end position="252"/>
    </location>
</feature>
<feature type="topological domain" description="Periplasmic" evidence="1">
    <location>
        <begin position="253"/>
        <end position="268"/>
    </location>
</feature>
<feature type="transmembrane region" description="Helical" evidence="1">
    <location>
        <begin position="269"/>
        <end position="287"/>
    </location>
</feature>
<feature type="topological domain" description="Cytoplasmic" evidence="1">
    <location>
        <begin position="288"/>
        <end position="313"/>
    </location>
</feature>
<feature type="transmembrane region" description="Helical" evidence="1">
    <location>
        <begin position="314"/>
        <end position="331"/>
    </location>
</feature>
<feature type="topological domain" description="Periplasmic" evidence="1">
    <location>
        <begin position="332"/>
        <end position="341"/>
    </location>
</feature>
<feature type="transmembrane region" description="Helical" evidence="1">
    <location>
        <begin position="342"/>
        <end position="365"/>
    </location>
</feature>
<feature type="topological domain" description="Cytoplasmic" evidence="1">
    <location>
        <begin position="366"/>
        <end position="425"/>
    </location>
</feature>
<feature type="transmembrane region" description="Helical" evidence="1">
    <location>
        <begin position="426"/>
        <end position="443"/>
    </location>
</feature>
<feature type="topological domain" description="Periplasmic" evidence="1">
    <location>
        <begin position="444"/>
        <end position="446"/>
    </location>
</feature>
<feature type="sequence conflict" description="In Ref. 1; AAG59322." evidence="2" ref="1">
    <original>E</original>
    <variation>K</variation>
    <location>
        <position position="214"/>
    </location>
</feature>
<accession>P0ABP1</accession>
<accession>P14409</accession>
<protein>
    <recommendedName>
        <fullName evidence="1">Anaerobic C4-dicarboxylate transporter DcuB</fullName>
    </recommendedName>
</protein>
<name>DCUB_ECO57</name>
<dbReference type="EMBL" id="AE005174">
    <property type="protein sequence ID" value="AAG59322.1"/>
    <property type="molecule type" value="Genomic_DNA"/>
</dbReference>
<dbReference type="EMBL" id="BA000007">
    <property type="protein sequence ID" value="BAB38528.1"/>
    <property type="molecule type" value="Genomic_DNA"/>
</dbReference>
<dbReference type="PIR" id="A91267">
    <property type="entry name" value="A91267"/>
</dbReference>
<dbReference type="PIR" id="F86107">
    <property type="entry name" value="F86107"/>
</dbReference>
<dbReference type="RefSeq" id="NP_313132.1">
    <property type="nucleotide sequence ID" value="NC_002695.1"/>
</dbReference>
<dbReference type="RefSeq" id="WP_000899522.1">
    <property type="nucleotide sequence ID" value="NZ_VOAI01000008.1"/>
</dbReference>
<dbReference type="RefSeq" id="WP_000899526.1">
    <property type="nucleotide sequence ID" value="NZ_LPWC02000002.1"/>
</dbReference>
<dbReference type="STRING" id="155864.Z5725"/>
<dbReference type="GeneID" id="914219"/>
<dbReference type="GeneID" id="93777709"/>
<dbReference type="KEGG" id="ece:Z5725"/>
<dbReference type="KEGG" id="ecs:ECs_5105"/>
<dbReference type="PATRIC" id="fig|386585.9.peg.5335"/>
<dbReference type="eggNOG" id="COG2704">
    <property type="taxonomic scope" value="Bacteria"/>
</dbReference>
<dbReference type="HOGENOM" id="CLU_036056_1_1_6"/>
<dbReference type="OMA" id="DKDPEFQ"/>
<dbReference type="Proteomes" id="UP000000558">
    <property type="component" value="Chromosome"/>
</dbReference>
<dbReference type="Proteomes" id="UP000002519">
    <property type="component" value="Chromosome"/>
</dbReference>
<dbReference type="GO" id="GO:0005886">
    <property type="term" value="C:plasma membrane"/>
    <property type="evidence" value="ECO:0007669"/>
    <property type="project" value="UniProtKB-SubCell"/>
</dbReference>
<dbReference type="GO" id="GO:0015297">
    <property type="term" value="F:antiporter activity"/>
    <property type="evidence" value="ECO:0007669"/>
    <property type="project" value="UniProtKB-KW"/>
</dbReference>
<dbReference type="GO" id="GO:0015556">
    <property type="term" value="F:C4-dicarboxylate transmembrane transporter activity"/>
    <property type="evidence" value="ECO:0007669"/>
    <property type="project" value="InterPro"/>
</dbReference>
<dbReference type="InterPro" id="IPR004668">
    <property type="entry name" value="Anaer_Dcu_memb_transpt"/>
</dbReference>
<dbReference type="NCBIfam" id="TIGR00770">
    <property type="entry name" value="Dcu"/>
    <property type="match status" value="1"/>
</dbReference>
<dbReference type="NCBIfam" id="NF006927">
    <property type="entry name" value="PRK09412.1"/>
    <property type="match status" value="1"/>
</dbReference>
<dbReference type="NCBIfam" id="NF009136">
    <property type="entry name" value="PRK12489.1"/>
    <property type="match status" value="1"/>
</dbReference>
<dbReference type="PANTHER" id="PTHR36106">
    <property type="entry name" value="ANAEROBIC C4-DICARBOXYLATE TRANSPORTER DCUB"/>
    <property type="match status" value="1"/>
</dbReference>
<dbReference type="PANTHER" id="PTHR36106:SF3">
    <property type="entry name" value="ANAEROBIC C4-DICARBOXYLATE TRANSPORTER DCUB"/>
    <property type="match status" value="1"/>
</dbReference>
<dbReference type="Pfam" id="PF03605">
    <property type="entry name" value="DcuA_DcuB"/>
    <property type="match status" value="1"/>
</dbReference>
<dbReference type="PIRSF" id="PIRSF004539">
    <property type="entry name" value="C4-dicrbxl_trns"/>
    <property type="match status" value="1"/>
</dbReference>